<feature type="chain" id="PRO_0000410821" description="Protein HRI1">
    <location>
        <begin position="1"/>
        <end position="184"/>
    </location>
</feature>
<feature type="modified residue" description="Phosphoserine" evidence="2">
    <location>
        <position position="143"/>
    </location>
</feature>
<organism>
    <name type="scientific">Saccharomyces cerevisiae (strain VIN 13)</name>
    <name type="common">Baker's yeast</name>
    <dbReference type="NCBI Taxonomy" id="764099"/>
    <lineage>
        <taxon>Eukaryota</taxon>
        <taxon>Fungi</taxon>
        <taxon>Dikarya</taxon>
        <taxon>Ascomycota</taxon>
        <taxon>Saccharomycotina</taxon>
        <taxon>Saccharomycetes</taxon>
        <taxon>Saccharomycetales</taxon>
        <taxon>Saccharomycetaceae</taxon>
        <taxon>Saccharomyces</taxon>
    </lineage>
</organism>
<sequence length="184" mass="20773">MPALLKRLLFQVGPHPNERTFTLSSVSTDGHYISLRXFVKPSGDELSFPFEWAFAGTNETVKVNDQGNGVVTQDFNFWLDTNVYLNVPNTHRGEVNTTWKNWDSGCVEETGAVYPFGADKESVSFRELWQPVDPSREDLVIVSPNNEKFSSNARSIVLKVTDEAYDGLVIVIGRWIQGFFVPKE</sequence>
<dbReference type="EMBL" id="ADXC01000057">
    <property type="protein sequence ID" value="EGA77622.1"/>
    <property type="molecule type" value="Genomic_DNA"/>
</dbReference>
<dbReference type="HOGENOM" id="CLU_097607_0_0_1"/>
<dbReference type="OMA" id="GEVNTTW"/>
<dbReference type="OrthoDB" id="17082at4893"/>
<dbReference type="GO" id="GO:0005737">
    <property type="term" value="C:cytoplasm"/>
    <property type="evidence" value="ECO:0007669"/>
    <property type="project" value="UniProtKB-SubCell"/>
</dbReference>
<dbReference type="GO" id="GO:0005634">
    <property type="term" value="C:nucleus"/>
    <property type="evidence" value="ECO:0007669"/>
    <property type="project" value="UniProtKB-SubCell"/>
</dbReference>
<dbReference type="CDD" id="cd11692">
    <property type="entry name" value="HRI1_N_like"/>
    <property type="match status" value="1"/>
</dbReference>
<dbReference type="Gene3D" id="2.40.128.310">
    <property type="entry name" value="Protein HRI1, C-terminal domain"/>
    <property type="match status" value="1"/>
</dbReference>
<dbReference type="Gene3D" id="2.40.128.320">
    <property type="entry name" value="Protein HRI1, N-terminal domain"/>
    <property type="match status" value="1"/>
</dbReference>
<dbReference type="InterPro" id="IPR031818">
    <property type="entry name" value="Hri1"/>
</dbReference>
<dbReference type="InterPro" id="IPR038744">
    <property type="entry name" value="Hri1_N"/>
</dbReference>
<dbReference type="InterPro" id="IPR043047">
    <property type="entry name" value="Hri1_N_sf"/>
</dbReference>
<dbReference type="Pfam" id="PF16815">
    <property type="entry name" value="HRI1"/>
    <property type="match status" value="1"/>
</dbReference>
<keyword id="KW-0963">Cytoplasm</keyword>
<keyword id="KW-0539">Nucleus</keyword>
<keyword id="KW-0597">Phosphoprotein</keyword>
<gene>
    <name type="primary">HRI1</name>
    <name type="ORF">VIN13_3338</name>
</gene>
<name>HRI1_YEASV</name>
<reference key="1">
    <citation type="journal article" date="2011" name="PLoS Genet.">
        <title>Whole-genome comparison reveals novel genetic elements that characterize the genome of industrial strains of Saccharomyces cerevisiae.</title>
        <authorList>
            <person name="Borneman A.R."/>
            <person name="Desany B.A."/>
            <person name="Riches D."/>
            <person name="Affourtit J.P."/>
            <person name="Forgan A.H."/>
            <person name="Pretorius I.S."/>
            <person name="Egholm M."/>
            <person name="Chambers P.J."/>
        </authorList>
    </citation>
    <scope>NUCLEOTIDE SEQUENCE [LARGE SCALE GENOMIC DNA]</scope>
    <source>
        <strain>VIN 13</strain>
    </source>
</reference>
<accession>E7LXU7</accession>
<protein>
    <recommendedName>
        <fullName>Protein HRI1</fullName>
    </recommendedName>
    <alternativeName>
        <fullName>HRR25-interacting protein 1</fullName>
    </alternativeName>
</protein>
<comment type="subunit">
    <text evidence="1">Interacts with HRR25. May interact with SEC72.</text>
</comment>
<comment type="subcellular location">
    <subcellularLocation>
        <location evidence="1">Cytoplasm</location>
    </subcellularLocation>
    <subcellularLocation>
        <location evidence="1">Nucleus</location>
    </subcellularLocation>
</comment>
<comment type="similarity">
    <text evidence="3">Belongs to the HRI1 family.</text>
</comment>
<proteinExistence type="inferred from homology"/>
<evidence type="ECO:0000250" key="1"/>
<evidence type="ECO:0000250" key="2">
    <source>
        <dbReference type="UniProtKB" id="Q05905"/>
    </source>
</evidence>
<evidence type="ECO:0000305" key="3"/>